<proteinExistence type="evidence at protein level"/>
<gene>
    <name type="primary">FABP1</name>
</gene>
<sequence>MKAIGLPDDLIQKGKDIKGVSEVVQEGKHFKVTITTGSKMETMTGEKVKTVVRMEGDNKLVTTFKGIKSVTEFNGDTVXNXMTLGXIVFKRVSKR</sequence>
<evidence type="ECO:0000250" key="1"/>
<evidence type="ECO:0000250" key="2">
    <source>
        <dbReference type="UniProtKB" id="P02692"/>
    </source>
</evidence>
<evidence type="ECO:0000250" key="3">
    <source>
        <dbReference type="UniProtKB" id="P07148"/>
    </source>
</evidence>
<evidence type="ECO:0000250" key="4">
    <source>
        <dbReference type="UniProtKB" id="P12710"/>
    </source>
</evidence>
<evidence type="ECO:0000305" key="5"/>
<dbReference type="GO" id="GO:0005737">
    <property type="term" value="C:cytoplasm"/>
    <property type="evidence" value="ECO:0007669"/>
    <property type="project" value="UniProtKB-SubCell"/>
</dbReference>
<dbReference type="GO" id="GO:0008289">
    <property type="term" value="F:lipid binding"/>
    <property type="evidence" value="ECO:0007669"/>
    <property type="project" value="UniProtKB-KW"/>
</dbReference>
<dbReference type="Gene3D" id="2.40.128.20">
    <property type="match status" value="1"/>
</dbReference>
<dbReference type="InterPro" id="IPR012674">
    <property type="entry name" value="Calycin"/>
</dbReference>
<dbReference type="Pfam" id="PF14651">
    <property type="entry name" value="Lipocalin_7"/>
    <property type="match status" value="1"/>
</dbReference>
<dbReference type="SUPFAM" id="SSF50814">
    <property type="entry name" value="Lipocalins"/>
    <property type="match status" value="1"/>
</dbReference>
<comment type="function">
    <text evidence="1">This protein binds free fatty acids and their coenzyme A derivatives, bilirubin, and some other small molecules in the cytoplasm; it may be involved in intracellular lipid transport.</text>
</comment>
<comment type="subunit">
    <text>Monomer.</text>
</comment>
<comment type="subcellular location">
    <subcellularLocation>
        <location evidence="1">Cytoplasm</location>
    </subcellularLocation>
</comment>
<comment type="similarity">
    <text evidence="5">Belongs to the calycin superfamily. Fatty-acid binding protein (FABP) family.</text>
</comment>
<feature type="chain" id="PRO_0000067339" description="Fatty acid-binding protein, liver">
    <location>
        <begin position="1"/>
        <end position="95"/>
    </location>
</feature>
<feature type="modified residue" description="N6-succinyllysine" evidence="4">
    <location>
        <position position="13"/>
    </location>
</feature>
<feature type="modified residue" description="N6-succinyllysine" evidence="4">
    <location>
        <position position="18"/>
    </location>
</feature>
<feature type="modified residue" description="Phosphoserine" evidence="2">
    <location>
        <position position="21"/>
    </location>
</feature>
<feature type="modified residue" description="N6-succinyllysine" evidence="4">
    <location>
        <position position="28"/>
    </location>
</feature>
<feature type="modified residue" description="Phosphothreonine" evidence="3">
    <location>
        <position position="33"/>
    </location>
</feature>
<feature type="modified residue" description="Phosphoserine" evidence="3">
    <location>
        <position position="38"/>
    </location>
</feature>
<feature type="modified residue" description="N6-succinyllysine" evidence="4">
    <location>
        <position position="39"/>
    </location>
</feature>
<feature type="modified residue" description="N6-succinyllysine" evidence="4">
    <location>
        <position position="47"/>
    </location>
</feature>
<feature type="modified residue" description="N6-succinyllysine" evidence="4">
    <location>
        <position position="59"/>
    </location>
</feature>
<feature type="modified residue" description="Phosphoserine" evidence="4">
    <location>
        <position position="69"/>
    </location>
</feature>
<feature type="modified residue" description="N6-succinyllysine" evidence="4">
    <location>
        <position position="90"/>
    </location>
</feature>
<feature type="non-consecutive residues" evidence="5">
    <location>
        <begin position="39"/>
        <end position="40"/>
    </location>
</feature>
<feature type="non-terminal residue">
    <location>
        <position position="1"/>
    </location>
</feature>
<organism>
    <name type="scientific">Chaetophractus villosus</name>
    <name type="common">South American armadillo</name>
    <dbReference type="NCBI Taxonomy" id="29080"/>
    <lineage>
        <taxon>Eukaryota</taxon>
        <taxon>Metazoa</taxon>
        <taxon>Chordata</taxon>
        <taxon>Craniata</taxon>
        <taxon>Vertebrata</taxon>
        <taxon>Euteleostomi</taxon>
        <taxon>Mammalia</taxon>
        <taxon>Eutheria</taxon>
        <taxon>Xenarthra</taxon>
        <taxon>Cingulata</taxon>
        <taxon>Chlamyphoridae</taxon>
        <taxon>Chaetophractus</taxon>
    </lineage>
</organism>
<protein>
    <recommendedName>
        <fullName>Fatty acid-binding protein, liver</fullName>
    </recommendedName>
    <alternativeName>
        <fullName>Fatty acid-binding protein 1</fullName>
    </alternativeName>
    <alternativeName>
        <fullName>Liver-type fatty acid-binding protein</fullName>
        <shortName>L-FABP</shortName>
    </alternativeName>
</protein>
<reference key="1">
    <citation type="journal article" date="1997" name="Comp. Biochem. Physiol.">
        <title>Purification and partial structural characterization of a fatty acid-binding protein from the liver of the South American armadillo Chaetophractus villosus.</title>
        <authorList>
            <person name="Cavagnari B.M."/>
            <person name="Cordoba O.L."/>
            <person name="Affanni J.M."/>
            <person name="Santome J.A."/>
        </authorList>
    </citation>
    <scope>PROTEIN SEQUENCE</scope>
    <source>
        <tissue>Liver</tissue>
    </source>
</reference>
<keyword id="KW-0963">Cytoplasm</keyword>
<keyword id="KW-0903">Direct protein sequencing</keyword>
<keyword id="KW-0446">Lipid-binding</keyword>
<keyword id="KW-0597">Phosphoprotein</keyword>
<keyword id="KW-0813">Transport</keyword>
<name>FABPL_CHAVI</name>
<accession>P82145</accession>